<protein>
    <recommendedName>
        <fullName evidence="1">Glycerol-3-phosphate acyltransferase</fullName>
    </recommendedName>
    <alternativeName>
        <fullName evidence="1">G3P acyltransferase</fullName>
        <shortName evidence="1">GPAT</shortName>
        <ecNumber evidence="1">2.3.1.15</ecNumber>
        <ecNumber evidence="1">2.3.1.n5</ecNumber>
    </alternativeName>
    <alternativeName>
        <fullName evidence="1">Lysophosphatidic acid synthase</fullName>
        <shortName evidence="1">LPA synthase</shortName>
    </alternativeName>
</protein>
<comment type="function">
    <text evidence="1">Catalyzes the transfer of an acyl group from acyl-ACP to glycerol-3-phosphate (G3P) to form lysophosphatidic acid (LPA). This enzyme can also utilize acyl-CoA as fatty acyl donor, but not acyl-PO(4).</text>
</comment>
<comment type="catalytic activity">
    <reaction evidence="1">
        <text>sn-glycerol 3-phosphate + an acyl-CoA = a 1-acyl-sn-glycero-3-phosphate + CoA</text>
        <dbReference type="Rhea" id="RHEA:15325"/>
        <dbReference type="ChEBI" id="CHEBI:57287"/>
        <dbReference type="ChEBI" id="CHEBI:57597"/>
        <dbReference type="ChEBI" id="CHEBI:57970"/>
        <dbReference type="ChEBI" id="CHEBI:58342"/>
        <dbReference type="EC" id="2.3.1.15"/>
    </reaction>
</comment>
<comment type="catalytic activity">
    <reaction evidence="1">
        <text>a fatty acyl-[ACP] + sn-glycerol 3-phosphate = a 1-acyl-sn-glycero-3-phosphate + holo-[ACP]</text>
        <dbReference type="Rhea" id="RHEA:42300"/>
        <dbReference type="Rhea" id="RHEA-COMP:9685"/>
        <dbReference type="Rhea" id="RHEA-COMP:14125"/>
        <dbReference type="ChEBI" id="CHEBI:57597"/>
        <dbReference type="ChEBI" id="CHEBI:57970"/>
        <dbReference type="ChEBI" id="CHEBI:64479"/>
        <dbReference type="ChEBI" id="CHEBI:138651"/>
        <dbReference type="EC" id="2.3.1.n5"/>
    </reaction>
</comment>
<comment type="pathway">
    <text evidence="1">Lipid metabolism; phospholipid metabolism.</text>
</comment>
<comment type="subunit">
    <text evidence="1">Probably interacts with PlsX.</text>
</comment>
<comment type="subcellular location">
    <subcellularLocation>
        <location evidence="1">Cell inner membrane</location>
        <topology evidence="1">Multi-pass membrane protein</topology>
    </subcellularLocation>
</comment>
<comment type="similarity">
    <text evidence="1">Belongs to the PlsY family.</text>
</comment>
<organism>
    <name type="scientific">Escherichia coli O127:H6 (strain E2348/69 / EPEC)</name>
    <dbReference type="NCBI Taxonomy" id="574521"/>
    <lineage>
        <taxon>Bacteria</taxon>
        <taxon>Pseudomonadati</taxon>
        <taxon>Pseudomonadota</taxon>
        <taxon>Gammaproteobacteria</taxon>
        <taxon>Enterobacterales</taxon>
        <taxon>Enterobacteriaceae</taxon>
        <taxon>Escherichia</taxon>
    </lineage>
</organism>
<dbReference type="EC" id="2.3.1.15" evidence="1"/>
<dbReference type="EC" id="2.3.1.n5" evidence="1"/>
<dbReference type="EMBL" id="FM180568">
    <property type="protein sequence ID" value="CAS10900.1"/>
    <property type="molecule type" value="Genomic_DNA"/>
</dbReference>
<dbReference type="RefSeq" id="WP_001272796.1">
    <property type="nucleotide sequence ID" value="NC_011601.1"/>
</dbReference>
<dbReference type="SMR" id="B7UIW7"/>
<dbReference type="GeneID" id="93778934"/>
<dbReference type="KEGG" id="ecg:E2348C_3352"/>
<dbReference type="HOGENOM" id="CLU_081254_0_2_6"/>
<dbReference type="UniPathway" id="UPA00085"/>
<dbReference type="Proteomes" id="UP000008205">
    <property type="component" value="Chromosome"/>
</dbReference>
<dbReference type="GO" id="GO:0005886">
    <property type="term" value="C:plasma membrane"/>
    <property type="evidence" value="ECO:0007669"/>
    <property type="project" value="UniProtKB-SubCell"/>
</dbReference>
<dbReference type="GO" id="GO:0043772">
    <property type="term" value="F:acyl-phosphate glycerol-3-phosphate acyltransferase activity"/>
    <property type="evidence" value="ECO:0007669"/>
    <property type="project" value="InterPro"/>
</dbReference>
<dbReference type="GO" id="GO:0004366">
    <property type="term" value="F:glycerol-3-phosphate O-acyltransferase activity"/>
    <property type="evidence" value="ECO:0007669"/>
    <property type="project" value="UniProtKB-UniRule"/>
</dbReference>
<dbReference type="GO" id="GO:0008654">
    <property type="term" value="P:phospholipid biosynthetic process"/>
    <property type="evidence" value="ECO:0007669"/>
    <property type="project" value="UniProtKB-UniRule"/>
</dbReference>
<dbReference type="HAMAP" id="MF_01043">
    <property type="entry name" value="PlsY"/>
    <property type="match status" value="1"/>
</dbReference>
<dbReference type="InterPro" id="IPR003811">
    <property type="entry name" value="G3P_acylTferase_PlsY"/>
</dbReference>
<dbReference type="NCBIfam" id="TIGR00023">
    <property type="entry name" value="glycerol-3-phosphate 1-O-acyltransferase PlsY"/>
    <property type="match status" value="1"/>
</dbReference>
<dbReference type="PANTHER" id="PTHR30309:SF0">
    <property type="entry name" value="GLYCEROL-3-PHOSPHATE ACYLTRANSFERASE-RELATED"/>
    <property type="match status" value="1"/>
</dbReference>
<dbReference type="PANTHER" id="PTHR30309">
    <property type="entry name" value="INNER MEMBRANE PROTEIN YGIH"/>
    <property type="match status" value="1"/>
</dbReference>
<dbReference type="Pfam" id="PF02660">
    <property type="entry name" value="G3P_acyltransf"/>
    <property type="match status" value="1"/>
</dbReference>
<dbReference type="SMART" id="SM01207">
    <property type="entry name" value="G3P_acyltransf"/>
    <property type="match status" value="1"/>
</dbReference>
<gene>
    <name evidence="1" type="primary">plsY</name>
    <name type="synonym">ygiH</name>
    <name type="ordered locus">E2348C_3352</name>
</gene>
<sequence>MSAIAPGMILIAYLCGSISSAILVCRLCGLPDPRTSGSGNPGATNVLRIGGKGAAVAVLIFDVLKGMLPVWGAYELGVSPFWLGLIAIAACLGHIWPVFFGFKGGKGVATAFGAIAPIGWDLTGVMAGTWLLTVLLSGYSSLGAIVSALIAPFYVWWFKPQFTFPVSMLSCLILLRHHDNIQRLWRRQETKIWTKFKRKREKDPE</sequence>
<name>PLSY_ECO27</name>
<feature type="chain" id="PRO_1000149569" description="Glycerol-3-phosphate acyltransferase">
    <location>
        <begin position="1"/>
        <end position="205"/>
    </location>
</feature>
<feature type="topological domain" description="Periplasmic" evidence="1">
    <location>
        <begin position="1"/>
        <end position="3"/>
    </location>
</feature>
<feature type="transmembrane region" description="Helical" evidence="1">
    <location>
        <begin position="4"/>
        <end position="24"/>
    </location>
</feature>
<feature type="topological domain" description="Cytoplasmic" evidence="1">
    <location>
        <begin position="25"/>
        <end position="52"/>
    </location>
</feature>
<feature type="transmembrane region" description="Helical" evidence="1">
    <location>
        <begin position="53"/>
        <end position="73"/>
    </location>
</feature>
<feature type="topological domain" description="Periplasmic" evidence="1">
    <location>
        <begin position="74"/>
        <end position="80"/>
    </location>
</feature>
<feature type="transmembrane region" description="Helical" evidence="1">
    <location>
        <begin position="81"/>
        <end position="101"/>
    </location>
</feature>
<feature type="topological domain" description="Cytoplasmic" evidence="1">
    <location>
        <begin position="102"/>
        <end position="111"/>
    </location>
</feature>
<feature type="transmembrane region" description="Helical" evidence="1">
    <location>
        <begin position="112"/>
        <end position="132"/>
    </location>
</feature>
<feature type="topological domain" description="Periplasmic" evidence="1">
    <location>
        <begin position="133"/>
        <end position="137"/>
    </location>
</feature>
<feature type="transmembrane region" description="Helical" evidence="1">
    <location>
        <begin position="138"/>
        <end position="158"/>
    </location>
</feature>
<feature type="topological domain" description="Cytoplasmic" evidence="1">
    <location>
        <begin position="159"/>
        <end position="205"/>
    </location>
</feature>
<accession>B7UIW7</accession>
<evidence type="ECO:0000255" key="1">
    <source>
        <dbReference type="HAMAP-Rule" id="MF_01043"/>
    </source>
</evidence>
<reference key="1">
    <citation type="journal article" date="2009" name="J. Bacteriol.">
        <title>Complete genome sequence and comparative genome analysis of enteropathogenic Escherichia coli O127:H6 strain E2348/69.</title>
        <authorList>
            <person name="Iguchi A."/>
            <person name="Thomson N.R."/>
            <person name="Ogura Y."/>
            <person name="Saunders D."/>
            <person name="Ooka T."/>
            <person name="Henderson I.R."/>
            <person name="Harris D."/>
            <person name="Asadulghani M."/>
            <person name="Kurokawa K."/>
            <person name="Dean P."/>
            <person name="Kenny B."/>
            <person name="Quail M.A."/>
            <person name="Thurston S."/>
            <person name="Dougan G."/>
            <person name="Hayashi T."/>
            <person name="Parkhill J."/>
            <person name="Frankel G."/>
        </authorList>
    </citation>
    <scope>NUCLEOTIDE SEQUENCE [LARGE SCALE GENOMIC DNA]</scope>
    <source>
        <strain>E2348/69 / EPEC</strain>
    </source>
</reference>
<proteinExistence type="inferred from homology"/>
<keyword id="KW-0997">Cell inner membrane</keyword>
<keyword id="KW-1003">Cell membrane</keyword>
<keyword id="KW-0444">Lipid biosynthesis</keyword>
<keyword id="KW-0443">Lipid metabolism</keyword>
<keyword id="KW-0472">Membrane</keyword>
<keyword id="KW-0594">Phospholipid biosynthesis</keyword>
<keyword id="KW-1208">Phospholipid metabolism</keyword>
<keyword id="KW-1185">Reference proteome</keyword>
<keyword id="KW-0808">Transferase</keyword>
<keyword id="KW-0812">Transmembrane</keyword>
<keyword id="KW-1133">Transmembrane helix</keyword>